<feature type="chain" id="PRO_0000140060" description="Glutamyl-tRNA(Gln) amidotransferase subunit D">
    <location>
        <begin position="1"/>
        <end position="438"/>
    </location>
</feature>
<feature type="domain" description="Asparaginase/glutaminase" evidence="2">
    <location>
        <begin position="92"/>
        <end position="422"/>
    </location>
</feature>
<feature type="active site" evidence="1">
    <location>
        <position position="102"/>
    </location>
</feature>
<feature type="active site" evidence="1">
    <location>
        <position position="178"/>
    </location>
</feature>
<feature type="active site" evidence="1">
    <location>
        <position position="179"/>
    </location>
</feature>
<feature type="active site" evidence="1">
    <location>
        <position position="256"/>
    </location>
</feature>
<evidence type="ECO:0000255" key="1">
    <source>
        <dbReference type="HAMAP-Rule" id="MF_00586"/>
    </source>
</evidence>
<evidence type="ECO:0000255" key="2">
    <source>
        <dbReference type="PROSITE-ProRule" id="PRU01068"/>
    </source>
</evidence>
<organism>
    <name type="scientific">Pyrococcus furiosus (strain ATCC 43587 / DSM 3638 / JCM 8422 / Vc1)</name>
    <dbReference type="NCBI Taxonomy" id="186497"/>
    <lineage>
        <taxon>Archaea</taxon>
        <taxon>Methanobacteriati</taxon>
        <taxon>Methanobacteriota</taxon>
        <taxon>Thermococci</taxon>
        <taxon>Thermococcales</taxon>
        <taxon>Thermococcaceae</taxon>
        <taxon>Pyrococcus</taxon>
    </lineage>
</organism>
<protein>
    <recommendedName>
        <fullName evidence="1">Glutamyl-tRNA(Gln) amidotransferase subunit D</fullName>
        <shortName evidence="1">Glu-ADT subunit D</shortName>
        <ecNumber evidence="1">6.3.5.-</ecNumber>
    </recommendedName>
</protein>
<dbReference type="EC" id="6.3.5.-" evidence="1"/>
<dbReference type="EMBL" id="AE009950">
    <property type="protein sequence ID" value="AAL81585.1"/>
    <property type="molecule type" value="Genomic_DNA"/>
</dbReference>
<dbReference type="RefSeq" id="WP_011012608.1">
    <property type="nucleotide sequence ID" value="NZ_CP023154.1"/>
</dbReference>
<dbReference type="SMR" id="Q8U0X0"/>
<dbReference type="STRING" id="186497.PF1461"/>
<dbReference type="PaxDb" id="186497-PF1461"/>
<dbReference type="GeneID" id="41713271"/>
<dbReference type="KEGG" id="pfu:PF1461"/>
<dbReference type="PATRIC" id="fig|186497.12.peg.1523"/>
<dbReference type="eggNOG" id="arCOG01924">
    <property type="taxonomic scope" value="Archaea"/>
</dbReference>
<dbReference type="HOGENOM" id="CLU_019134_2_1_2"/>
<dbReference type="OrthoDB" id="371959at2157"/>
<dbReference type="PhylomeDB" id="Q8U0X0"/>
<dbReference type="Proteomes" id="UP000001013">
    <property type="component" value="Chromosome"/>
</dbReference>
<dbReference type="GO" id="GO:0004067">
    <property type="term" value="F:asparaginase activity"/>
    <property type="evidence" value="ECO:0007669"/>
    <property type="project" value="InterPro"/>
</dbReference>
<dbReference type="GO" id="GO:0005524">
    <property type="term" value="F:ATP binding"/>
    <property type="evidence" value="ECO:0007669"/>
    <property type="project" value="UniProtKB-KW"/>
</dbReference>
<dbReference type="GO" id="GO:0050567">
    <property type="term" value="F:glutaminyl-tRNA synthase (glutamine-hydrolyzing) activity"/>
    <property type="evidence" value="ECO:0007669"/>
    <property type="project" value="UniProtKB-UniRule"/>
</dbReference>
<dbReference type="GO" id="GO:0006520">
    <property type="term" value="P:amino acid metabolic process"/>
    <property type="evidence" value="ECO:0007669"/>
    <property type="project" value="InterPro"/>
</dbReference>
<dbReference type="GO" id="GO:0006450">
    <property type="term" value="P:regulation of translational fidelity"/>
    <property type="evidence" value="ECO:0007669"/>
    <property type="project" value="InterPro"/>
</dbReference>
<dbReference type="GO" id="GO:0006412">
    <property type="term" value="P:translation"/>
    <property type="evidence" value="ECO:0007669"/>
    <property type="project" value="UniProtKB-UniRule"/>
</dbReference>
<dbReference type="CDD" id="cd08962">
    <property type="entry name" value="GatD"/>
    <property type="match status" value="1"/>
</dbReference>
<dbReference type="FunFam" id="3.40.50.1170:FF:000001">
    <property type="entry name" value="L-asparaginase 2"/>
    <property type="match status" value="1"/>
</dbReference>
<dbReference type="Gene3D" id="2.30.30.520">
    <property type="match status" value="1"/>
</dbReference>
<dbReference type="Gene3D" id="3.40.50.40">
    <property type="match status" value="1"/>
</dbReference>
<dbReference type="Gene3D" id="3.40.50.1170">
    <property type="entry name" value="L-asparaginase, N-terminal domain"/>
    <property type="match status" value="1"/>
</dbReference>
<dbReference type="HAMAP" id="MF_00586">
    <property type="entry name" value="GatD"/>
    <property type="match status" value="1"/>
</dbReference>
<dbReference type="InterPro" id="IPR006033">
    <property type="entry name" value="AsnA_fam"/>
</dbReference>
<dbReference type="InterPro" id="IPR036152">
    <property type="entry name" value="Asp/glu_Ase-like_sf"/>
</dbReference>
<dbReference type="InterPro" id="IPR006034">
    <property type="entry name" value="Asparaginase/glutaminase-like"/>
</dbReference>
<dbReference type="InterPro" id="IPR020827">
    <property type="entry name" value="Asparaginase/glutaminase_AS1"/>
</dbReference>
<dbReference type="InterPro" id="IPR027475">
    <property type="entry name" value="Asparaginase/glutaminase_AS2"/>
</dbReference>
<dbReference type="InterPro" id="IPR040919">
    <property type="entry name" value="Asparaginase_C"/>
</dbReference>
<dbReference type="InterPro" id="IPR011878">
    <property type="entry name" value="GatD"/>
</dbReference>
<dbReference type="InterPro" id="IPR040918">
    <property type="entry name" value="GatD_N"/>
</dbReference>
<dbReference type="InterPro" id="IPR037222">
    <property type="entry name" value="GatD_N_sf"/>
</dbReference>
<dbReference type="InterPro" id="IPR027473">
    <property type="entry name" value="L-asparaginase_C"/>
</dbReference>
<dbReference type="InterPro" id="IPR027474">
    <property type="entry name" value="L-asparaginase_N"/>
</dbReference>
<dbReference type="InterPro" id="IPR037152">
    <property type="entry name" value="L-asparaginase_N_sf"/>
</dbReference>
<dbReference type="NCBIfam" id="TIGR00519">
    <property type="entry name" value="asnASE_I"/>
    <property type="match status" value="1"/>
</dbReference>
<dbReference type="NCBIfam" id="TIGR02153">
    <property type="entry name" value="gatD_arch"/>
    <property type="match status" value="1"/>
</dbReference>
<dbReference type="NCBIfam" id="NF003217">
    <property type="entry name" value="PRK04183.1"/>
    <property type="match status" value="1"/>
</dbReference>
<dbReference type="PANTHER" id="PTHR11707:SF28">
    <property type="entry name" value="60 KDA LYSOPHOSPHOLIPASE"/>
    <property type="match status" value="1"/>
</dbReference>
<dbReference type="PANTHER" id="PTHR11707">
    <property type="entry name" value="L-ASPARAGINASE"/>
    <property type="match status" value="1"/>
</dbReference>
<dbReference type="Pfam" id="PF00710">
    <property type="entry name" value="Asparaginase"/>
    <property type="match status" value="1"/>
</dbReference>
<dbReference type="Pfam" id="PF17763">
    <property type="entry name" value="Asparaginase_C"/>
    <property type="match status" value="1"/>
</dbReference>
<dbReference type="Pfam" id="PF18195">
    <property type="entry name" value="GatD_N"/>
    <property type="match status" value="1"/>
</dbReference>
<dbReference type="PIRSF" id="PIRSF500175">
    <property type="entry name" value="Glu_ADT_D"/>
    <property type="match status" value="1"/>
</dbReference>
<dbReference type="PIRSF" id="PIRSF001220">
    <property type="entry name" value="L-ASNase_gatD"/>
    <property type="match status" value="1"/>
</dbReference>
<dbReference type="PRINTS" id="PR00139">
    <property type="entry name" value="ASNGLNASE"/>
</dbReference>
<dbReference type="SMART" id="SM00870">
    <property type="entry name" value="Asparaginase"/>
    <property type="match status" value="1"/>
</dbReference>
<dbReference type="SUPFAM" id="SSF141300">
    <property type="entry name" value="GatD N-terminal domain-like"/>
    <property type="match status" value="1"/>
</dbReference>
<dbReference type="SUPFAM" id="SSF53774">
    <property type="entry name" value="Glutaminase/Asparaginase"/>
    <property type="match status" value="1"/>
</dbReference>
<dbReference type="PROSITE" id="PS00144">
    <property type="entry name" value="ASN_GLN_ASE_1"/>
    <property type="match status" value="1"/>
</dbReference>
<dbReference type="PROSITE" id="PS00917">
    <property type="entry name" value="ASN_GLN_ASE_2"/>
    <property type="match status" value="1"/>
</dbReference>
<dbReference type="PROSITE" id="PS51732">
    <property type="entry name" value="ASN_GLN_ASE_3"/>
    <property type="match status" value="1"/>
</dbReference>
<gene>
    <name evidence="1" type="primary">gatD</name>
    <name type="ordered locus">PF1461</name>
</gene>
<keyword id="KW-0067">ATP-binding</keyword>
<keyword id="KW-0436">Ligase</keyword>
<keyword id="KW-0547">Nucleotide-binding</keyword>
<keyword id="KW-0648">Protein biosynthesis</keyword>
<keyword id="KW-1185">Reference proteome</keyword>
<proteinExistence type="inferred from homology"/>
<comment type="function">
    <text evidence="1">Allows the formation of correctly charged Gln-tRNA(Gln) through the transamidation of misacylated Glu-tRNA(Gln) in organisms which lack glutaminyl-tRNA synthetase. The reaction takes place in the presence of glutamine and ATP through an activated gamma-phospho-Glu-tRNA(Gln). The GatDE system is specific for glutamate and does not act on aspartate.</text>
</comment>
<comment type="catalytic activity">
    <reaction evidence="1">
        <text>L-glutamyl-tRNA(Gln) + L-glutamine + ATP + H2O = L-glutaminyl-tRNA(Gln) + L-glutamate + ADP + phosphate + H(+)</text>
        <dbReference type="Rhea" id="RHEA:17521"/>
        <dbReference type="Rhea" id="RHEA-COMP:9681"/>
        <dbReference type="Rhea" id="RHEA-COMP:9684"/>
        <dbReference type="ChEBI" id="CHEBI:15377"/>
        <dbReference type="ChEBI" id="CHEBI:15378"/>
        <dbReference type="ChEBI" id="CHEBI:29985"/>
        <dbReference type="ChEBI" id="CHEBI:30616"/>
        <dbReference type="ChEBI" id="CHEBI:43474"/>
        <dbReference type="ChEBI" id="CHEBI:58359"/>
        <dbReference type="ChEBI" id="CHEBI:78520"/>
        <dbReference type="ChEBI" id="CHEBI:78521"/>
        <dbReference type="ChEBI" id="CHEBI:456216"/>
    </reaction>
</comment>
<comment type="subunit">
    <text evidence="1">Heterodimer of GatD and GatE.</text>
</comment>
<comment type="similarity">
    <text evidence="1">Belongs to the asparaginase 1 family. GatD subfamily.</text>
</comment>
<reference key="1">
    <citation type="journal article" date="1999" name="Genetics">
        <title>Divergence of the hyperthermophilic archaea Pyrococcus furiosus and P. horikoshii inferred from complete genomic sequences.</title>
        <authorList>
            <person name="Maeder D.L."/>
            <person name="Weiss R.B."/>
            <person name="Dunn D.M."/>
            <person name="Cherry J.L."/>
            <person name="Gonzalez J.M."/>
            <person name="DiRuggiero J."/>
            <person name="Robb F.T."/>
        </authorList>
    </citation>
    <scope>NUCLEOTIDE SEQUENCE [LARGE SCALE GENOMIC DNA]</scope>
    <source>
        <strain>ATCC 43587 / DSM 3638 / JCM 8422 / Vc1</strain>
    </source>
</reference>
<name>GATD_PYRFU</name>
<accession>Q8U0X0</accession>
<sequence>MRVEEFLKQKGIEVGDYVRIIKVEDGEKVEYEGIVMPPYELSEGDTVVIKLDNGYNIGIAIEKIQEINVIEKAKAKPEVHFKAELEPRKELPTITILGTGGTIASRIDYETGAVYPAFTAEELAKAVPEIFEIANIKPKLLFNIFSEDMKPKHWIEIAHETAKALNSGNEGVVIAHGTDTMGYTAAALSFMLRNLTKPVVLVGAQRSSDRPSSDAAMNLICATRMAVSDAAEVMVVMHGETSDTYCLAHRGTKVRKMHTSRRDAFRSINDIPIAKIWSDGKIEFLRDDYRKRSEGEVWVDDKLEEKVALVKVYPGMSAELIDFLVDKGYKGIVIEGTGLGHTPSDLIPSIKRAVDEGVAVCMTSQCLYGRVNLNVYATGRKLLKAGVIPCEDMLPETAYVKLMWVLGHTNDLREAKKMMLTNYAGEITPYTKPNTFLI</sequence>